<reference key="1">
    <citation type="submission" date="2008-02" db="EMBL/GenBank/DDBJ databases">
        <title>Complete sequence of Pseudomonas putida W619.</title>
        <authorList>
            <person name="Copeland A."/>
            <person name="Lucas S."/>
            <person name="Lapidus A."/>
            <person name="Barry K."/>
            <person name="Detter J.C."/>
            <person name="Glavina del Rio T."/>
            <person name="Dalin E."/>
            <person name="Tice H."/>
            <person name="Pitluck S."/>
            <person name="Chain P."/>
            <person name="Malfatti S."/>
            <person name="Shin M."/>
            <person name="Vergez L."/>
            <person name="Schmutz J."/>
            <person name="Larimer F."/>
            <person name="Land M."/>
            <person name="Hauser L."/>
            <person name="Kyrpides N."/>
            <person name="Kim E."/>
            <person name="Taghavi S."/>
            <person name="Vangronsveld D."/>
            <person name="van der Lelie D."/>
            <person name="Richardson P."/>
        </authorList>
    </citation>
    <scope>NUCLEOTIDE SEQUENCE [LARGE SCALE GENOMIC DNA]</scope>
    <source>
        <strain>W619</strain>
    </source>
</reference>
<evidence type="ECO:0000255" key="1">
    <source>
        <dbReference type="HAMAP-Rule" id="MF_00692"/>
    </source>
</evidence>
<comment type="function">
    <text evidence="1">Nucleotidyltransferase involved in the post-translational modification of proteins. It can catalyze the addition of adenosine monophosphate (AMP) or uridine monophosphate (UMP) to a protein, resulting in modifications known as AMPylation and UMPylation.</text>
</comment>
<comment type="catalytic activity">
    <reaction evidence="1">
        <text>L-seryl-[protein] + ATP = 3-O-(5'-adenylyl)-L-seryl-[protein] + diphosphate</text>
        <dbReference type="Rhea" id="RHEA:58120"/>
        <dbReference type="Rhea" id="RHEA-COMP:9863"/>
        <dbReference type="Rhea" id="RHEA-COMP:15073"/>
        <dbReference type="ChEBI" id="CHEBI:29999"/>
        <dbReference type="ChEBI" id="CHEBI:30616"/>
        <dbReference type="ChEBI" id="CHEBI:33019"/>
        <dbReference type="ChEBI" id="CHEBI:142516"/>
        <dbReference type="EC" id="2.7.7.108"/>
    </reaction>
</comment>
<comment type="catalytic activity">
    <reaction evidence="1">
        <text>L-threonyl-[protein] + ATP = 3-O-(5'-adenylyl)-L-threonyl-[protein] + diphosphate</text>
        <dbReference type="Rhea" id="RHEA:54292"/>
        <dbReference type="Rhea" id="RHEA-COMP:11060"/>
        <dbReference type="Rhea" id="RHEA-COMP:13847"/>
        <dbReference type="ChEBI" id="CHEBI:30013"/>
        <dbReference type="ChEBI" id="CHEBI:30616"/>
        <dbReference type="ChEBI" id="CHEBI:33019"/>
        <dbReference type="ChEBI" id="CHEBI:138113"/>
        <dbReference type="EC" id="2.7.7.108"/>
    </reaction>
</comment>
<comment type="catalytic activity">
    <reaction evidence="1">
        <text>L-tyrosyl-[protein] + ATP = O-(5'-adenylyl)-L-tyrosyl-[protein] + diphosphate</text>
        <dbReference type="Rhea" id="RHEA:54288"/>
        <dbReference type="Rhea" id="RHEA-COMP:10136"/>
        <dbReference type="Rhea" id="RHEA-COMP:13846"/>
        <dbReference type="ChEBI" id="CHEBI:30616"/>
        <dbReference type="ChEBI" id="CHEBI:33019"/>
        <dbReference type="ChEBI" id="CHEBI:46858"/>
        <dbReference type="ChEBI" id="CHEBI:83624"/>
        <dbReference type="EC" id="2.7.7.108"/>
    </reaction>
</comment>
<comment type="catalytic activity">
    <reaction evidence="1">
        <text>L-histidyl-[protein] + UTP = N(tele)-(5'-uridylyl)-L-histidyl-[protein] + diphosphate</text>
        <dbReference type="Rhea" id="RHEA:83891"/>
        <dbReference type="Rhea" id="RHEA-COMP:9745"/>
        <dbReference type="Rhea" id="RHEA-COMP:20239"/>
        <dbReference type="ChEBI" id="CHEBI:29979"/>
        <dbReference type="ChEBI" id="CHEBI:33019"/>
        <dbReference type="ChEBI" id="CHEBI:46398"/>
        <dbReference type="ChEBI" id="CHEBI:233474"/>
    </reaction>
</comment>
<comment type="catalytic activity">
    <reaction evidence="1">
        <text>L-seryl-[protein] + UTP = O-(5'-uridylyl)-L-seryl-[protein] + diphosphate</text>
        <dbReference type="Rhea" id="RHEA:64604"/>
        <dbReference type="Rhea" id="RHEA-COMP:9863"/>
        <dbReference type="Rhea" id="RHEA-COMP:16635"/>
        <dbReference type="ChEBI" id="CHEBI:29999"/>
        <dbReference type="ChEBI" id="CHEBI:33019"/>
        <dbReference type="ChEBI" id="CHEBI:46398"/>
        <dbReference type="ChEBI" id="CHEBI:156051"/>
    </reaction>
</comment>
<comment type="catalytic activity">
    <reaction evidence="1">
        <text>L-tyrosyl-[protein] + UTP = O-(5'-uridylyl)-L-tyrosyl-[protein] + diphosphate</text>
        <dbReference type="Rhea" id="RHEA:83887"/>
        <dbReference type="Rhea" id="RHEA-COMP:10136"/>
        <dbReference type="Rhea" id="RHEA-COMP:20238"/>
        <dbReference type="ChEBI" id="CHEBI:33019"/>
        <dbReference type="ChEBI" id="CHEBI:46398"/>
        <dbReference type="ChEBI" id="CHEBI:46858"/>
        <dbReference type="ChEBI" id="CHEBI:90602"/>
    </reaction>
</comment>
<comment type="cofactor">
    <cofactor evidence="1">
        <name>Mg(2+)</name>
        <dbReference type="ChEBI" id="CHEBI:18420"/>
    </cofactor>
    <cofactor evidence="1">
        <name>Mn(2+)</name>
        <dbReference type="ChEBI" id="CHEBI:29035"/>
    </cofactor>
</comment>
<comment type="similarity">
    <text evidence="1">Belongs to the SELO family.</text>
</comment>
<protein>
    <recommendedName>
        <fullName evidence="1">Protein nucleotidyltransferase YdiU</fullName>
        <ecNumber evidence="1">2.7.7.-</ecNumber>
    </recommendedName>
    <alternativeName>
        <fullName evidence="1">Protein adenylyltransferase YdiU</fullName>
        <ecNumber evidence="1">2.7.7.108</ecNumber>
    </alternativeName>
    <alternativeName>
        <fullName evidence="1">Protein uridylyltransferase YdiU</fullName>
        <ecNumber evidence="1">2.7.7.-</ecNumber>
    </alternativeName>
</protein>
<name>SELO_PSEPW</name>
<feature type="chain" id="PRO_1000132118" description="Protein nucleotidyltransferase YdiU">
    <location>
        <begin position="1"/>
        <end position="486"/>
    </location>
</feature>
<feature type="active site" description="Proton acceptor" evidence="1">
    <location>
        <position position="252"/>
    </location>
</feature>
<feature type="binding site" evidence="1">
    <location>
        <position position="90"/>
    </location>
    <ligand>
        <name>ATP</name>
        <dbReference type="ChEBI" id="CHEBI:30616"/>
    </ligand>
</feature>
<feature type="binding site" evidence="1">
    <location>
        <position position="92"/>
    </location>
    <ligand>
        <name>ATP</name>
        <dbReference type="ChEBI" id="CHEBI:30616"/>
    </ligand>
</feature>
<feature type="binding site" evidence="1">
    <location>
        <position position="93"/>
    </location>
    <ligand>
        <name>ATP</name>
        <dbReference type="ChEBI" id="CHEBI:30616"/>
    </ligand>
</feature>
<feature type="binding site" evidence="1">
    <location>
        <position position="113"/>
    </location>
    <ligand>
        <name>ATP</name>
        <dbReference type="ChEBI" id="CHEBI:30616"/>
    </ligand>
</feature>
<feature type="binding site" evidence="1">
    <location>
        <position position="125"/>
    </location>
    <ligand>
        <name>ATP</name>
        <dbReference type="ChEBI" id="CHEBI:30616"/>
    </ligand>
</feature>
<feature type="binding site" evidence="1">
    <location>
        <position position="126"/>
    </location>
    <ligand>
        <name>ATP</name>
        <dbReference type="ChEBI" id="CHEBI:30616"/>
    </ligand>
</feature>
<feature type="binding site" evidence="1">
    <location>
        <position position="176"/>
    </location>
    <ligand>
        <name>ATP</name>
        <dbReference type="ChEBI" id="CHEBI:30616"/>
    </ligand>
</feature>
<feature type="binding site" evidence="1">
    <location>
        <position position="183"/>
    </location>
    <ligand>
        <name>ATP</name>
        <dbReference type="ChEBI" id="CHEBI:30616"/>
    </ligand>
</feature>
<feature type="binding site" evidence="1">
    <location>
        <position position="253"/>
    </location>
    <ligand>
        <name>Mg(2+)</name>
        <dbReference type="ChEBI" id="CHEBI:18420"/>
    </ligand>
</feature>
<feature type="binding site" evidence="1">
    <location>
        <position position="262"/>
    </location>
    <ligand>
        <name>ATP</name>
        <dbReference type="ChEBI" id="CHEBI:30616"/>
    </ligand>
</feature>
<feature type="binding site" evidence="1">
    <location>
        <position position="262"/>
    </location>
    <ligand>
        <name>Mg(2+)</name>
        <dbReference type="ChEBI" id="CHEBI:18420"/>
    </ligand>
</feature>
<proteinExistence type="inferred from homology"/>
<dbReference type="EC" id="2.7.7.-" evidence="1"/>
<dbReference type="EC" id="2.7.7.108" evidence="1"/>
<dbReference type="EMBL" id="CP000949">
    <property type="protein sequence ID" value="ACA70904.1"/>
    <property type="molecule type" value="Genomic_DNA"/>
</dbReference>
<dbReference type="SMR" id="B1J2K5"/>
<dbReference type="STRING" id="390235.PputW619_0398"/>
<dbReference type="KEGG" id="ppw:PputW619_0398"/>
<dbReference type="eggNOG" id="COG0397">
    <property type="taxonomic scope" value="Bacteria"/>
</dbReference>
<dbReference type="HOGENOM" id="CLU_010245_4_0_6"/>
<dbReference type="OrthoDB" id="9776281at2"/>
<dbReference type="GO" id="GO:0070733">
    <property type="term" value="F:AMPylase activity"/>
    <property type="evidence" value="ECO:0007669"/>
    <property type="project" value="RHEA"/>
</dbReference>
<dbReference type="GO" id="GO:0005524">
    <property type="term" value="F:ATP binding"/>
    <property type="evidence" value="ECO:0007669"/>
    <property type="project" value="UniProtKB-UniRule"/>
</dbReference>
<dbReference type="GO" id="GO:0000287">
    <property type="term" value="F:magnesium ion binding"/>
    <property type="evidence" value="ECO:0007669"/>
    <property type="project" value="UniProtKB-UniRule"/>
</dbReference>
<dbReference type="HAMAP" id="MF_00692">
    <property type="entry name" value="YdiU_SelO"/>
    <property type="match status" value="1"/>
</dbReference>
<dbReference type="InterPro" id="IPR003846">
    <property type="entry name" value="SelO"/>
</dbReference>
<dbReference type="NCBIfam" id="NF000658">
    <property type="entry name" value="PRK00029.1"/>
    <property type="match status" value="1"/>
</dbReference>
<dbReference type="NCBIfam" id="NF045949">
    <property type="entry name" value="PrtAdtaseSelOPseudom"/>
    <property type="match status" value="1"/>
</dbReference>
<dbReference type="PANTHER" id="PTHR32057">
    <property type="entry name" value="PROTEIN ADENYLYLTRANSFERASE SELO, MITOCHONDRIAL"/>
    <property type="match status" value="1"/>
</dbReference>
<dbReference type="PANTHER" id="PTHR32057:SF14">
    <property type="entry name" value="PROTEIN ADENYLYLTRANSFERASE SELO, MITOCHONDRIAL"/>
    <property type="match status" value="1"/>
</dbReference>
<dbReference type="Pfam" id="PF02696">
    <property type="entry name" value="SelO"/>
    <property type="match status" value="1"/>
</dbReference>
<gene>
    <name evidence="1" type="primary">ydiU</name>
    <name evidence="1" type="synonym">selO</name>
    <name type="ordered locus">PputW619_0398</name>
</gene>
<sequence length="486" mass="54686">MKALDQLTFDNRFARLGDAFSTQVLPEPIADPRLVIASKSAMALLDLDPAQADTPVFAELFSGHKLWEGADPRAMVYSGHQFGSYNPRLGDGRGLLLAEVVNDAGEHWDLHLKGAGQTPYSRMGDGRAVLRSSIREFLASEALHALGIATSRALCVIGSSTPVWRETRESAAMLTRLAQSHVRFGHFEYFYYTKQPEQQRVLIDHVLEQHYPECREAEQPYLAMFRTIVERNAELIAHWQAYGFCHGVMNTDNMSILGITFDFGPYAFLDDFDANFICNHSDDRGRYSYANQVPIAHWNLSALAQALTTVIEVEPLKEALGLFLPLYQAHYLDLMRRRLGLTTAEDDDMALVERLLQRMQSGGVDYNLFFRRLGDQPVAEALKGVRDDFIDLAGFDAWGADYLARCEREAGNGDGRRERMHAVNPLYVLRNYLAQKAIEAAEAGDYSEVRRLHQVLSTPFEEQAGMQAYAERPPAWGKHLEISCSS</sequence>
<organism>
    <name type="scientific">Pseudomonas putida (strain W619)</name>
    <dbReference type="NCBI Taxonomy" id="390235"/>
    <lineage>
        <taxon>Bacteria</taxon>
        <taxon>Pseudomonadati</taxon>
        <taxon>Pseudomonadota</taxon>
        <taxon>Gammaproteobacteria</taxon>
        <taxon>Pseudomonadales</taxon>
        <taxon>Pseudomonadaceae</taxon>
        <taxon>Pseudomonas</taxon>
    </lineage>
</organism>
<keyword id="KW-0067">ATP-binding</keyword>
<keyword id="KW-0460">Magnesium</keyword>
<keyword id="KW-0464">Manganese</keyword>
<keyword id="KW-0479">Metal-binding</keyword>
<keyword id="KW-0547">Nucleotide-binding</keyword>
<keyword id="KW-0548">Nucleotidyltransferase</keyword>
<keyword id="KW-0808">Transferase</keyword>
<accession>B1J2K5</accession>